<comment type="function">
    <text evidence="1">The B regulatory subunit may modulate substrate selectivity and catalytic activity, and may also direct the localization of the catalytic enzyme to a particular subcellular compartment.</text>
</comment>
<comment type="subunit">
    <text evidence="1">PP2A consists of a common heteromeric enzyme, composed of a catalytic subunit (subunits C), a constant regulatory subunit (subunit A), and a variety of regulatory subunits such as subunits B (the R2/B/PR55/B55, R3/B''/PR72/PR130/PR59 and R5/B'/B56 families).</text>
</comment>
<comment type="similarity">
    <text evidence="3">Belongs to the phosphatase 2A regulatory subunit B family.</text>
</comment>
<comment type="sequence caution" evidence="3">
    <conflict type="erroneous gene model prediction">
        <sequence resource="EMBL-CDS" id="BAD53757"/>
    </conflict>
</comment>
<sequence>MMNPDGGDGDRLEAAGAGSSSAQQGHPTMEWRFAQVFGERAAGEDVQEVDIISAIEFDKSGDHLATGDRGGRVVLFERTDARDNASRREMERQDAPITRHPEFRYKSEFQSHEPEFDYLKSLEIEEKINKIRWCQTANNSLSLLSTNDKTIKYWKVQEKKVKQVSVMNLDSRSVGTGTSSSASTSSSRGLLPNGGCSDKSSFLNSDILFPPGGYPSLRLPVVVASQDVNLVARCRRVYAHAHDYHINSISTNSDGETYISADDLRINLWNLEINNQSFNIVDVKPPNMEDLTEVITCAEFHPTHCNTLAYSSSKGSIRLIDLRQSALCDNHSKIFEEHEAPGSRSFFTEIIASISDIKFSRDGRYILSRDYMTLKLWDLNMDSGPVSTFQVHEHLRPKLCDLYENDSIFDKFECCLSGDGLHVATGSYGNLFRVFGCTPGSTEATTLEASRNPMRRQIVNPTRPTRTLTSLARGVRRGGENQGVDANGNSFDFSTKLLHLAWHPTENSIACAAANSLYMYYARRCLRKFIVFGSLLEAACLHMQPEIWCRMLSSIPPLGPKEAVDAHKMAFVAVTASLLIL</sequence>
<reference key="1">
    <citation type="journal article" date="2005" name="Nature">
        <title>The map-based sequence of the rice genome.</title>
        <authorList>
            <consortium name="International rice genome sequencing project (IRGSP)"/>
        </authorList>
    </citation>
    <scope>NUCLEOTIDE SEQUENCE [LARGE SCALE GENOMIC DNA]</scope>
    <source>
        <strain>cv. Nipponbare</strain>
    </source>
</reference>
<reference key="2">
    <citation type="journal article" date="2013" name="Rice">
        <title>Improvement of the Oryza sativa Nipponbare reference genome using next generation sequence and optical map data.</title>
        <authorList>
            <person name="Kawahara Y."/>
            <person name="de la Bastide M."/>
            <person name="Hamilton J.P."/>
            <person name="Kanamori H."/>
            <person name="McCombie W.R."/>
            <person name="Ouyang S."/>
            <person name="Schwartz D.C."/>
            <person name="Tanaka T."/>
            <person name="Wu J."/>
            <person name="Zhou S."/>
            <person name="Childs K.L."/>
            <person name="Davidson R.M."/>
            <person name="Lin H."/>
            <person name="Quesada-Ocampo L."/>
            <person name="Vaillancourt B."/>
            <person name="Sakai H."/>
            <person name="Lee S.S."/>
            <person name="Kim J."/>
            <person name="Numa H."/>
            <person name="Itoh T."/>
            <person name="Buell C.R."/>
            <person name="Matsumoto T."/>
        </authorList>
    </citation>
    <scope>GENOME REANNOTATION</scope>
    <source>
        <strain>cv. Nipponbare</strain>
    </source>
</reference>
<reference key="3">
    <citation type="journal article" date="2003" name="Science">
        <title>Collection, mapping, and annotation of over 28,000 cDNA clones from japonica rice.</title>
        <authorList>
            <consortium name="The rice full-length cDNA consortium"/>
        </authorList>
    </citation>
    <scope>NUCLEOTIDE SEQUENCE [LARGE SCALE MRNA]</scope>
    <source>
        <strain>cv. Nipponbare</strain>
    </source>
</reference>
<protein>
    <recommendedName>
        <fullName>Serine/threonine protein phosphatase 2A 55 kDa regulatory subunit B alpha isoform</fullName>
        <shortName>PP2A, subunit B, alpha isoform</shortName>
    </recommendedName>
</protein>
<gene>
    <name type="ordered locus">Os06g0563300</name>
    <name type="ordered locus">LOC_Os06g36770</name>
    <name type="ORF">P0656E03.30</name>
</gene>
<accession>Q5Z8Z7</accession>
<name>2ABA_ORYSJ</name>
<keyword id="KW-1185">Reference proteome</keyword>
<keyword id="KW-0677">Repeat</keyword>
<keyword id="KW-0853">WD repeat</keyword>
<organism>
    <name type="scientific">Oryza sativa subsp. japonica</name>
    <name type="common">Rice</name>
    <dbReference type="NCBI Taxonomy" id="39947"/>
    <lineage>
        <taxon>Eukaryota</taxon>
        <taxon>Viridiplantae</taxon>
        <taxon>Streptophyta</taxon>
        <taxon>Embryophyta</taxon>
        <taxon>Tracheophyta</taxon>
        <taxon>Spermatophyta</taxon>
        <taxon>Magnoliopsida</taxon>
        <taxon>Liliopsida</taxon>
        <taxon>Poales</taxon>
        <taxon>Poaceae</taxon>
        <taxon>BOP clade</taxon>
        <taxon>Oryzoideae</taxon>
        <taxon>Oryzeae</taxon>
        <taxon>Oryzinae</taxon>
        <taxon>Oryza</taxon>
        <taxon>Oryza sativa</taxon>
    </lineage>
</organism>
<dbReference type="EMBL" id="AP003714">
    <property type="protein sequence ID" value="BAD53757.1"/>
    <property type="status" value="ALT_SEQ"/>
    <property type="molecule type" value="Genomic_DNA"/>
</dbReference>
<dbReference type="EMBL" id="AP014962">
    <property type="status" value="NOT_ANNOTATED_CDS"/>
    <property type="molecule type" value="Genomic_DNA"/>
</dbReference>
<dbReference type="EMBL" id="AK111494">
    <property type="status" value="NOT_ANNOTATED_CDS"/>
    <property type="molecule type" value="mRNA"/>
</dbReference>
<dbReference type="SMR" id="Q5Z8Z7"/>
<dbReference type="FunCoup" id="Q5Z8Z7">
    <property type="interactions" value="2481"/>
</dbReference>
<dbReference type="STRING" id="39947.Q5Z8Z7"/>
<dbReference type="PaxDb" id="39947-Q5Z8Z7"/>
<dbReference type="eggNOG" id="KOG1354">
    <property type="taxonomic scope" value="Eukaryota"/>
</dbReference>
<dbReference type="InParanoid" id="Q5Z8Z7"/>
<dbReference type="OrthoDB" id="6274823at2759"/>
<dbReference type="PlantReactome" id="R-OSA-5632095">
    <property type="pathway name" value="Brassinosteroid signaling"/>
</dbReference>
<dbReference type="Proteomes" id="UP000000763">
    <property type="component" value="Chromosome 6"/>
</dbReference>
<dbReference type="Proteomes" id="UP000059680">
    <property type="component" value="Chromosome 6"/>
</dbReference>
<dbReference type="GO" id="GO:0005829">
    <property type="term" value="C:cytosol"/>
    <property type="evidence" value="ECO:0000318"/>
    <property type="project" value="GO_Central"/>
</dbReference>
<dbReference type="GO" id="GO:0000159">
    <property type="term" value="C:protein phosphatase type 2A complex"/>
    <property type="evidence" value="ECO:0000318"/>
    <property type="project" value="GO_Central"/>
</dbReference>
<dbReference type="GO" id="GO:0019888">
    <property type="term" value="F:protein phosphatase regulator activity"/>
    <property type="evidence" value="ECO:0000318"/>
    <property type="project" value="GO_Central"/>
</dbReference>
<dbReference type="FunFam" id="2.130.10.10:FF:000569">
    <property type="entry name" value="Serine/threonine-protein phosphatase 2A 55 kDa regulatory subunit B"/>
    <property type="match status" value="1"/>
</dbReference>
<dbReference type="FunFam" id="2.130.10.10:FF:000609">
    <property type="entry name" value="Serine/threonine-protein phosphatase 2A 55 kDa regulatory subunit B"/>
    <property type="match status" value="1"/>
</dbReference>
<dbReference type="Gene3D" id="2.130.10.10">
    <property type="entry name" value="YVTN repeat-like/Quinoprotein amine dehydrogenase"/>
    <property type="match status" value="1"/>
</dbReference>
<dbReference type="InterPro" id="IPR000009">
    <property type="entry name" value="PP2A_PR55"/>
</dbReference>
<dbReference type="InterPro" id="IPR018067">
    <property type="entry name" value="PP2A_PR55_CS"/>
</dbReference>
<dbReference type="InterPro" id="IPR015943">
    <property type="entry name" value="WD40/YVTN_repeat-like_dom_sf"/>
</dbReference>
<dbReference type="InterPro" id="IPR036322">
    <property type="entry name" value="WD40_repeat_dom_sf"/>
</dbReference>
<dbReference type="InterPro" id="IPR001680">
    <property type="entry name" value="WD40_rpt"/>
</dbReference>
<dbReference type="PANTHER" id="PTHR11871">
    <property type="entry name" value="PROTEIN PHOSPHATASE PP2A REGULATORY SUBUNIT B"/>
    <property type="match status" value="1"/>
</dbReference>
<dbReference type="Pfam" id="PF00400">
    <property type="entry name" value="WD40"/>
    <property type="match status" value="1"/>
</dbReference>
<dbReference type="PIRSF" id="PIRSF037309">
    <property type="entry name" value="PP2A_PR55"/>
    <property type="match status" value="1"/>
</dbReference>
<dbReference type="PRINTS" id="PR00600">
    <property type="entry name" value="PP2APR55"/>
</dbReference>
<dbReference type="SMART" id="SM00320">
    <property type="entry name" value="WD40"/>
    <property type="match status" value="6"/>
</dbReference>
<dbReference type="SUPFAM" id="SSF50978">
    <property type="entry name" value="WD40 repeat-like"/>
    <property type="match status" value="1"/>
</dbReference>
<dbReference type="PROSITE" id="PS01024">
    <property type="entry name" value="PR55_1"/>
    <property type="match status" value="1"/>
</dbReference>
<dbReference type="PROSITE" id="PS00678">
    <property type="entry name" value="WD_REPEATS_1"/>
    <property type="match status" value="1"/>
</dbReference>
<feature type="chain" id="PRO_0000247272" description="Serine/threonine protein phosphatase 2A 55 kDa regulatory subunit B alpha isoform">
    <location>
        <begin position="1"/>
        <end position="581"/>
    </location>
</feature>
<feature type="repeat" description="WD 1">
    <location>
        <begin position="47"/>
        <end position="86"/>
    </location>
</feature>
<feature type="repeat" description="WD 2">
    <location>
        <begin position="123"/>
        <end position="164"/>
    </location>
</feature>
<feature type="repeat" description="WD 3">
    <location>
        <begin position="241"/>
        <end position="279"/>
    </location>
</feature>
<feature type="repeat" description="WD 4">
    <location>
        <begin position="290"/>
        <end position="330"/>
    </location>
</feature>
<feature type="repeat" description="WD 5">
    <location>
        <begin position="349"/>
        <end position="387"/>
    </location>
</feature>
<feature type="repeat" description="WD 6">
    <location>
        <begin position="492"/>
        <end position="530"/>
    </location>
</feature>
<feature type="region of interest" description="Disordered" evidence="2">
    <location>
        <begin position="1"/>
        <end position="27"/>
    </location>
</feature>
<feature type="region of interest" description="Disordered" evidence="2">
    <location>
        <begin position="172"/>
        <end position="192"/>
    </location>
</feature>
<feature type="compositionally biased region" description="Low complexity" evidence="2">
    <location>
        <begin position="14"/>
        <end position="25"/>
    </location>
</feature>
<feature type="compositionally biased region" description="Low complexity" evidence="2">
    <location>
        <begin position="172"/>
        <end position="189"/>
    </location>
</feature>
<feature type="sequence conflict" description="In Ref. 3; AK111494." evidence="3" ref="3">
    <original>H</original>
    <variation>Q</variation>
    <location>
        <position position="422"/>
    </location>
</feature>
<feature type="sequence conflict" description="In Ref. 3; AK111494." evidence="3" ref="3">
    <original>M</original>
    <variation>L</variation>
    <location>
        <position position="551"/>
    </location>
</feature>
<proteinExistence type="evidence at transcript level"/>
<evidence type="ECO:0000250" key="1"/>
<evidence type="ECO:0000256" key="2">
    <source>
        <dbReference type="SAM" id="MobiDB-lite"/>
    </source>
</evidence>
<evidence type="ECO:0000305" key="3"/>